<evidence type="ECO:0000255" key="1">
    <source>
        <dbReference type="HAMAP-Rule" id="MF_00340"/>
    </source>
</evidence>
<evidence type="ECO:0000305" key="2"/>
<geneLocation type="chloroplast"/>
<proteinExistence type="inferred from homology"/>
<feature type="chain" id="PRO_0000276466" description="Large ribosomal subunit protein bL32c">
    <location>
        <begin position="1"/>
        <end position="55"/>
    </location>
</feature>
<comment type="subcellular location">
    <subcellularLocation>
        <location>Plastid</location>
        <location>Chloroplast</location>
    </subcellularLocation>
</comment>
<comment type="similarity">
    <text evidence="1">Belongs to the bacterial ribosomal protein bL32 family.</text>
</comment>
<reference key="1">
    <citation type="journal article" date="2006" name="BMC Genomics">
        <title>Complete plastid genome sequence of Daucus carota: implications for biotechnology and phylogeny of angiosperms.</title>
        <authorList>
            <person name="Ruhlman T."/>
            <person name="Lee S.-B."/>
            <person name="Jansen R.K."/>
            <person name="Hostetler J.B."/>
            <person name="Tallon L.J."/>
            <person name="Town C.D."/>
            <person name="Daniell H."/>
        </authorList>
    </citation>
    <scope>NUCLEOTIDE SEQUENCE [LARGE SCALE GENOMIC DNA]</scope>
    <source>
        <strain>cv. Danvers Half-long</strain>
    </source>
</reference>
<keyword id="KW-0150">Chloroplast</keyword>
<keyword id="KW-0934">Plastid</keyword>
<keyword id="KW-0687">Ribonucleoprotein</keyword>
<keyword id="KW-0689">Ribosomal protein</keyword>
<accession>Q0G9R4</accession>
<organism>
    <name type="scientific">Daucus carota</name>
    <name type="common">Wild carrot</name>
    <dbReference type="NCBI Taxonomy" id="4039"/>
    <lineage>
        <taxon>Eukaryota</taxon>
        <taxon>Viridiplantae</taxon>
        <taxon>Streptophyta</taxon>
        <taxon>Embryophyta</taxon>
        <taxon>Tracheophyta</taxon>
        <taxon>Spermatophyta</taxon>
        <taxon>Magnoliopsida</taxon>
        <taxon>eudicotyledons</taxon>
        <taxon>Gunneridae</taxon>
        <taxon>Pentapetalae</taxon>
        <taxon>asterids</taxon>
        <taxon>campanulids</taxon>
        <taxon>Apiales</taxon>
        <taxon>Apiaceae</taxon>
        <taxon>Apioideae</taxon>
        <taxon>Scandiceae</taxon>
        <taxon>Daucinae</taxon>
        <taxon>Daucus</taxon>
        <taxon>Daucus sect. Daucus</taxon>
    </lineage>
</organism>
<gene>
    <name evidence="1" type="primary">rpl32</name>
</gene>
<sequence>MAVPKKRTSISKKRIRKNIWKGKGSWAALKALSLGKSLSTGNSKSFFVRQKKNKS</sequence>
<dbReference type="EMBL" id="DQ898156">
    <property type="protein sequence ID" value="ABI32472.1"/>
    <property type="molecule type" value="Genomic_DNA"/>
</dbReference>
<dbReference type="RefSeq" id="YP_740165.1">
    <property type="nucleotide sequence ID" value="NC_008325.1"/>
</dbReference>
<dbReference type="SMR" id="Q0G9R4"/>
<dbReference type="GeneID" id="4266807"/>
<dbReference type="OMA" id="RKAHWKR"/>
<dbReference type="GO" id="GO:0009507">
    <property type="term" value="C:chloroplast"/>
    <property type="evidence" value="ECO:0007669"/>
    <property type="project" value="UniProtKB-SubCell"/>
</dbReference>
<dbReference type="GO" id="GO:0015934">
    <property type="term" value="C:large ribosomal subunit"/>
    <property type="evidence" value="ECO:0007669"/>
    <property type="project" value="InterPro"/>
</dbReference>
<dbReference type="GO" id="GO:0003735">
    <property type="term" value="F:structural constituent of ribosome"/>
    <property type="evidence" value="ECO:0007669"/>
    <property type="project" value="InterPro"/>
</dbReference>
<dbReference type="GO" id="GO:0006412">
    <property type="term" value="P:translation"/>
    <property type="evidence" value="ECO:0007669"/>
    <property type="project" value="UniProtKB-UniRule"/>
</dbReference>
<dbReference type="HAMAP" id="MF_00340">
    <property type="entry name" value="Ribosomal_bL32"/>
    <property type="match status" value="1"/>
</dbReference>
<dbReference type="InterPro" id="IPR002677">
    <property type="entry name" value="Ribosomal_bL32"/>
</dbReference>
<dbReference type="InterPro" id="IPR044958">
    <property type="entry name" value="Ribosomal_bL32_plant/cyanobact"/>
</dbReference>
<dbReference type="InterPro" id="IPR011332">
    <property type="entry name" value="Ribosomal_zn-bd"/>
</dbReference>
<dbReference type="PANTHER" id="PTHR36083">
    <property type="entry name" value="50S RIBOSOMAL PROTEIN L32, CHLOROPLASTIC"/>
    <property type="match status" value="1"/>
</dbReference>
<dbReference type="PANTHER" id="PTHR36083:SF1">
    <property type="entry name" value="LARGE RIBOSOMAL SUBUNIT PROTEIN BL32C"/>
    <property type="match status" value="1"/>
</dbReference>
<dbReference type="Pfam" id="PF01783">
    <property type="entry name" value="Ribosomal_L32p"/>
    <property type="match status" value="1"/>
</dbReference>
<dbReference type="SUPFAM" id="SSF57829">
    <property type="entry name" value="Zn-binding ribosomal proteins"/>
    <property type="match status" value="1"/>
</dbReference>
<name>RK32_DAUCA</name>
<protein>
    <recommendedName>
        <fullName evidence="1">Large ribosomal subunit protein bL32c</fullName>
    </recommendedName>
    <alternativeName>
        <fullName evidence="2">50S ribosomal protein L32, chloroplastic</fullName>
    </alternativeName>
</protein>